<proteinExistence type="evidence at transcript level"/>
<keyword id="KW-0158">Chromosome</keyword>
<keyword id="KW-0221">Differentiation</keyword>
<keyword id="KW-0469">Meiosis</keyword>
<keyword id="KW-0539">Nucleus</keyword>
<keyword id="KW-0896">Oogenesis</keyword>
<keyword id="KW-0597">Phosphoprotein</keyword>
<keyword id="KW-1185">Reference proteome</keyword>
<keyword id="KW-0744">Spermatogenesis</keyword>
<accession>E2IUK4</accession>
<name>HORM1_PIG</name>
<evidence type="ECO:0000250" key="1"/>
<evidence type="ECO:0000250" key="2">
    <source>
        <dbReference type="UniProtKB" id="Q9D5T7"/>
    </source>
</evidence>
<evidence type="ECO:0000255" key="3">
    <source>
        <dbReference type="PROSITE-ProRule" id="PRU00109"/>
    </source>
</evidence>
<evidence type="ECO:0000256" key="4">
    <source>
        <dbReference type="SAM" id="MobiDB-lite"/>
    </source>
</evidence>
<protein>
    <recommendedName>
        <fullName>HORMA domain-containing protein 1</fullName>
    </recommendedName>
</protein>
<reference key="1">
    <citation type="submission" date="2010-07" db="EMBL/GenBank/DDBJ databases">
        <authorList>
            <person name="Liu Y."/>
        </authorList>
    </citation>
    <scope>NUCLEOTIDE SEQUENCE [LARGE SCALE MRNA]</scope>
</reference>
<gene>
    <name type="primary">HORMAD1</name>
</gene>
<dbReference type="EMBL" id="HM627267">
    <property type="protein sequence ID" value="ADK36685.1"/>
    <property type="molecule type" value="mRNA"/>
</dbReference>
<dbReference type="RefSeq" id="NP_001181910.1">
    <property type="nucleotide sequence ID" value="NM_001194981.1"/>
</dbReference>
<dbReference type="SMR" id="E2IUK4"/>
<dbReference type="FunCoup" id="E2IUK4">
    <property type="interactions" value="145"/>
</dbReference>
<dbReference type="STRING" id="9823.ENSSSCP00000007090"/>
<dbReference type="PaxDb" id="9823-ENSSSCP00000007090"/>
<dbReference type="GeneID" id="100499502"/>
<dbReference type="KEGG" id="ssc:100499502"/>
<dbReference type="CTD" id="84072"/>
<dbReference type="eggNOG" id="KOG4652">
    <property type="taxonomic scope" value="Eukaryota"/>
</dbReference>
<dbReference type="InParanoid" id="E2IUK4"/>
<dbReference type="OrthoDB" id="1928087at2759"/>
<dbReference type="Proteomes" id="UP000008227">
    <property type="component" value="Unplaced"/>
</dbReference>
<dbReference type="Proteomes" id="UP000314985">
    <property type="component" value="Unplaced"/>
</dbReference>
<dbReference type="Proteomes" id="UP000694570">
    <property type="component" value="Unplaced"/>
</dbReference>
<dbReference type="Proteomes" id="UP000694571">
    <property type="component" value="Unplaced"/>
</dbReference>
<dbReference type="Proteomes" id="UP000694720">
    <property type="component" value="Unplaced"/>
</dbReference>
<dbReference type="Proteomes" id="UP000694722">
    <property type="component" value="Unplaced"/>
</dbReference>
<dbReference type="Proteomes" id="UP000694723">
    <property type="component" value="Unplaced"/>
</dbReference>
<dbReference type="Proteomes" id="UP000694724">
    <property type="component" value="Unplaced"/>
</dbReference>
<dbReference type="Proteomes" id="UP000694725">
    <property type="component" value="Unplaced"/>
</dbReference>
<dbReference type="Proteomes" id="UP000694726">
    <property type="component" value="Unplaced"/>
</dbReference>
<dbReference type="Proteomes" id="UP000694727">
    <property type="component" value="Unplaced"/>
</dbReference>
<dbReference type="Proteomes" id="UP000694728">
    <property type="component" value="Unplaced"/>
</dbReference>
<dbReference type="GO" id="GO:0005694">
    <property type="term" value="C:chromosome"/>
    <property type="evidence" value="ECO:0000250"/>
    <property type="project" value="UniProtKB"/>
</dbReference>
<dbReference type="GO" id="GO:0005634">
    <property type="term" value="C:nucleus"/>
    <property type="evidence" value="ECO:0000250"/>
    <property type="project" value="UniProtKB"/>
</dbReference>
<dbReference type="GO" id="GO:0001824">
    <property type="term" value="P:blastocyst development"/>
    <property type="evidence" value="ECO:0000250"/>
    <property type="project" value="UniProtKB"/>
</dbReference>
<dbReference type="GO" id="GO:0051321">
    <property type="term" value="P:meiotic cell cycle"/>
    <property type="evidence" value="ECO:0000250"/>
    <property type="project" value="UniProtKB"/>
</dbReference>
<dbReference type="GO" id="GO:0042138">
    <property type="term" value="P:meiotic DNA double-strand break formation"/>
    <property type="evidence" value="ECO:0000250"/>
    <property type="project" value="UniProtKB"/>
</dbReference>
<dbReference type="GO" id="GO:0051598">
    <property type="term" value="P:meiotic recombination checkpoint signaling"/>
    <property type="evidence" value="ECO:0000250"/>
    <property type="project" value="UniProtKB"/>
</dbReference>
<dbReference type="GO" id="GO:0051177">
    <property type="term" value="P:meiotic sister chromatid cohesion"/>
    <property type="evidence" value="ECO:0000250"/>
    <property type="project" value="UniProtKB"/>
</dbReference>
<dbReference type="GO" id="GO:0048477">
    <property type="term" value="P:oogenesis"/>
    <property type="evidence" value="ECO:0000250"/>
    <property type="project" value="UniProtKB"/>
</dbReference>
<dbReference type="GO" id="GO:0060629">
    <property type="term" value="P:regulation of homologous chromosome segregation"/>
    <property type="evidence" value="ECO:0000250"/>
    <property type="project" value="UniProtKB"/>
</dbReference>
<dbReference type="GO" id="GO:0007283">
    <property type="term" value="P:spermatogenesis"/>
    <property type="evidence" value="ECO:0000250"/>
    <property type="project" value="UniProtKB"/>
</dbReference>
<dbReference type="GO" id="GO:0007130">
    <property type="term" value="P:synaptonemal complex assembly"/>
    <property type="evidence" value="ECO:0000250"/>
    <property type="project" value="UniProtKB"/>
</dbReference>
<dbReference type="FunFam" id="3.30.900.10:FF:000006">
    <property type="entry name" value="HORMA domain-containing protein 1"/>
    <property type="match status" value="1"/>
</dbReference>
<dbReference type="Gene3D" id="3.30.900.10">
    <property type="entry name" value="HORMA domain"/>
    <property type="match status" value="1"/>
</dbReference>
<dbReference type="InterPro" id="IPR003511">
    <property type="entry name" value="HORMA_dom"/>
</dbReference>
<dbReference type="InterPro" id="IPR036570">
    <property type="entry name" value="HORMA_dom_sf"/>
</dbReference>
<dbReference type="InterPro" id="IPR051294">
    <property type="entry name" value="HORMA_MeioticProgression"/>
</dbReference>
<dbReference type="PANTHER" id="PTHR48225">
    <property type="entry name" value="HORMA DOMAIN-CONTAINING PROTEIN 1"/>
    <property type="match status" value="1"/>
</dbReference>
<dbReference type="PANTHER" id="PTHR48225:SF1">
    <property type="entry name" value="HORMA DOMAIN-CONTAINING PROTEIN 1"/>
    <property type="match status" value="1"/>
</dbReference>
<dbReference type="Pfam" id="PF02301">
    <property type="entry name" value="HORMA"/>
    <property type="match status" value="1"/>
</dbReference>
<dbReference type="SUPFAM" id="SSF56019">
    <property type="entry name" value="The spindle assembly checkpoint protein mad2"/>
    <property type="match status" value="1"/>
</dbReference>
<dbReference type="PROSITE" id="PS50815">
    <property type="entry name" value="HORMA"/>
    <property type="match status" value="1"/>
</dbReference>
<organism>
    <name type="scientific">Sus scrofa</name>
    <name type="common">Pig</name>
    <dbReference type="NCBI Taxonomy" id="9823"/>
    <lineage>
        <taxon>Eukaryota</taxon>
        <taxon>Metazoa</taxon>
        <taxon>Chordata</taxon>
        <taxon>Craniata</taxon>
        <taxon>Vertebrata</taxon>
        <taxon>Euteleostomi</taxon>
        <taxon>Mammalia</taxon>
        <taxon>Eutheria</taxon>
        <taxon>Laurasiatheria</taxon>
        <taxon>Artiodactyla</taxon>
        <taxon>Suina</taxon>
        <taxon>Suidae</taxon>
        <taxon>Sus</taxon>
    </lineage>
</organism>
<comment type="function">
    <text evidence="2">Plays a key role in meiotic progression. Regulates 3 different functions during meiosis: ensures that sufficient numbers of processed DNA double-strand breaks (DSBs) are available for successful homology search by increasing the steady-state numbers of single-stranded DSB ends. Promotes synaptonemal-complex formation independently of its role in homology search. Plays a key role in the male mid-pachytene checkpoint and the female meiotic prophase checkpoint: required for efficient build-up of ATR activity on unsynapsed chromosome regions, a process believed to form the basis of meiotic silencing of unsynapsed chromatin (MSUC) and meiotic prophase quality control in both sexes.</text>
</comment>
<comment type="subunit">
    <text evidence="2">Interacts with HORMAD2. Interacts with IHO1.</text>
</comment>
<comment type="subcellular location">
    <subcellularLocation>
        <location evidence="2">Nucleus</location>
    </subcellularLocation>
    <subcellularLocation>
        <location evidence="2">Chromosome</location>
    </subcellularLocation>
    <text evidence="2">Preferentially localizes to unsynapsed or desynapsed chromosomal regions during the prophase I stage of meiosis. TRIP13 is required for depletion from synapsed chromosomes. The expression of the phosphorylated form at Ser-377 is restricted to unsynapsed chromosomal regions (By similarity).</text>
</comment>
<comment type="PTM">
    <text evidence="2">Phosphorylated at Ser-377 in a SPO11-dependent manner.</text>
</comment>
<sequence>MATAQLQRTSMSALVFPNKISTEQQSLVLVKRLLAVSVSCITYLRGIFPECAYGTRYLDDLCVKILREDKNCPGSTQLVKWMLGCYDALQKKYLRMVVLAVYTNPEDPQTISECYQFKFKYTSNGPIMDFISKNQSSESSMSSADTKKASILLIRKIYILMQNLGPLPNDVCLTMKLFYYDEVTPPDYQPPGFKDGDCEGVIFEGEPMYLNVGEVPTPFHTFKVKVTTEKERMENIYSGILSPKQIKTPLQKILMDKDDLEDEQEHYINDDFDIETKMEEQKKKLGSSELGEPNLVCEEDEIMRSKESPELSISHSQVEQLVSKTSELDVSESKTRSGKIFQNKMANGNQQIKSKESRKRSQLESGKTVLHHFDSSSQDSVPKRRKFSEPKEHI</sequence>
<feature type="chain" id="PRO_0000410913" description="HORMA domain-containing protein 1">
    <location>
        <begin position="1"/>
        <end position="394"/>
    </location>
</feature>
<feature type="domain" description="HORMA" evidence="3">
    <location>
        <begin position="24"/>
        <end position="226"/>
    </location>
</feature>
<feature type="region of interest" description="Disordered" evidence="4">
    <location>
        <begin position="306"/>
        <end position="394"/>
    </location>
</feature>
<feature type="short sequence motif" description="Nuclear localization signal" evidence="1">
    <location>
        <begin position="383"/>
        <end position="386"/>
    </location>
</feature>
<feature type="compositionally biased region" description="Polar residues" evidence="4">
    <location>
        <begin position="311"/>
        <end position="325"/>
    </location>
</feature>
<feature type="compositionally biased region" description="Basic and acidic residues" evidence="4">
    <location>
        <begin position="353"/>
        <end position="362"/>
    </location>
</feature>
<feature type="modified residue" description="Phosphoserine" evidence="2">
    <location>
        <position position="376"/>
    </location>
</feature>